<accession>P49623</accession>
<dbReference type="EMBL" id="M36265">
    <property type="protein sequence ID" value="AAA26581.1"/>
    <property type="molecule type" value="Genomic_DNA"/>
</dbReference>
<dbReference type="SMR" id="P49623"/>
<dbReference type="STRING" id="273526.SMDB11_3783"/>
<dbReference type="GO" id="GO:1990904">
    <property type="term" value="C:ribonucleoprotein complex"/>
    <property type="evidence" value="ECO:0007669"/>
    <property type="project" value="UniProtKB-KW"/>
</dbReference>
<dbReference type="GO" id="GO:0005840">
    <property type="term" value="C:ribosome"/>
    <property type="evidence" value="ECO:0007669"/>
    <property type="project" value="UniProtKB-KW"/>
</dbReference>
<dbReference type="GO" id="GO:0019843">
    <property type="term" value="F:rRNA binding"/>
    <property type="evidence" value="ECO:0007669"/>
    <property type="project" value="UniProtKB-KW"/>
</dbReference>
<dbReference type="GO" id="GO:0000049">
    <property type="term" value="F:tRNA binding"/>
    <property type="evidence" value="ECO:0007669"/>
    <property type="project" value="UniProtKB-KW"/>
</dbReference>
<dbReference type="Gene3D" id="3.30.1440.10">
    <property type="match status" value="1"/>
</dbReference>
<dbReference type="InterPro" id="IPR022803">
    <property type="entry name" value="Ribosomal_uL5_dom_sf"/>
</dbReference>
<dbReference type="SUPFAM" id="SSF55282">
    <property type="entry name" value="RL5-like"/>
    <property type="match status" value="1"/>
</dbReference>
<reference key="1">
    <citation type="journal article" date="1988" name="J. Mol. Biol.">
        <title>Translational regulation of the spc operon in Escherichia coli. Identification and structural analysis of the target site for S8 repressor protein.</title>
        <authorList>
            <person name="Cerretti D.P."/>
            <person name="Mattheakis L.C."/>
            <person name="Kearney K.R."/>
            <person name="Vu L."/>
            <person name="Nomura M."/>
        </authorList>
    </citation>
    <scope>NUCLEOTIDE SEQUENCE [GENOMIC DNA]</scope>
    <source>
        <strain>NO1001</strain>
    </source>
</reference>
<feature type="initiator methionine" description="Removed" evidence="1">
    <location>
        <position position="1"/>
    </location>
</feature>
<feature type="chain" id="PRO_0000124982" description="Large ribosomal subunit protein uL5">
    <location>
        <begin position="2"/>
        <end position="43" status="greater than"/>
    </location>
</feature>
<feature type="non-terminal residue">
    <location>
        <position position="43"/>
    </location>
</feature>
<protein>
    <recommendedName>
        <fullName evidence="2">Large ribosomal subunit protein uL5</fullName>
    </recommendedName>
    <alternativeName>
        <fullName>50S ribosomal protein L5</fullName>
    </alternativeName>
</protein>
<keyword id="KW-0687">Ribonucleoprotein</keyword>
<keyword id="KW-0689">Ribosomal protein</keyword>
<keyword id="KW-0694">RNA-binding</keyword>
<keyword id="KW-0699">rRNA-binding</keyword>
<keyword id="KW-0820">tRNA-binding</keyword>
<evidence type="ECO:0000250" key="1"/>
<evidence type="ECO:0000305" key="2"/>
<sequence length="43" mass="5007">MAKLHDYYKDEVVKQLMSQFDYNSVMQVPRVEKITLNMGVGEA</sequence>
<organism>
    <name type="scientific">Serratia marcescens</name>
    <dbReference type="NCBI Taxonomy" id="615"/>
    <lineage>
        <taxon>Bacteria</taxon>
        <taxon>Pseudomonadati</taxon>
        <taxon>Pseudomonadota</taxon>
        <taxon>Gammaproteobacteria</taxon>
        <taxon>Enterobacterales</taxon>
        <taxon>Yersiniaceae</taxon>
        <taxon>Serratia</taxon>
    </lineage>
</organism>
<comment type="function">
    <text evidence="1">This is one of the proteins that bind and probably mediate the attachment of the 5S RNA into the large ribosomal subunit, where it forms part of the central protuberance. In the 70S ribosome it contacts protein S13 of the 30S subunit (bridge B1b), connecting the 2 subunits; this bridge is implicated in subunit movement. Contacts the P site tRNA; the 5S rRNA and some of its associated proteins might help stabilize positioning of ribosome-bound tRNAs (By similarity).</text>
</comment>
<comment type="subunit">
    <text evidence="1">Part of the 50S ribosomal subunit; part of the 5S rRNA/L5/L18/L25 subcomplex. Contacts the 5S rRNA and the P site tRNA. Forms a bridge to the 30S subunit in the 70S ribosome (By similarity).</text>
</comment>
<comment type="similarity">
    <text evidence="2">Belongs to the universal ribosomal protein uL5 family.</text>
</comment>
<name>RL5_SERMA</name>
<gene>
    <name type="primary">rplE</name>
</gene>
<proteinExistence type="inferred from homology"/>